<name>GRPE_ECOHS</name>
<feature type="chain" id="PRO_1000065517" description="Protein GrpE">
    <location>
        <begin position="1"/>
        <end position="197"/>
    </location>
</feature>
<feature type="region of interest" description="Disordered" evidence="2">
    <location>
        <begin position="1"/>
        <end position="39"/>
    </location>
</feature>
<reference key="1">
    <citation type="journal article" date="2008" name="J. Bacteriol.">
        <title>The pangenome structure of Escherichia coli: comparative genomic analysis of E. coli commensal and pathogenic isolates.</title>
        <authorList>
            <person name="Rasko D.A."/>
            <person name="Rosovitz M.J."/>
            <person name="Myers G.S.A."/>
            <person name="Mongodin E.F."/>
            <person name="Fricke W.F."/>
            <person name="Gajer P."/>
            <person name="Crabtree J."/>
            <person name="Sebaihia M."/>
            <person name="Thomson N.R."/>
            <person name="Chaudhuri R."/>
            <person name="Henderson I.R."/>
            <person name="Sperandio V."/>
            <person name="Ravel J."/>
        </authorList>
    </citation>
    <scope>NUCLEOTIDE SEQUENCE [LARGE SCALE GENOMIC DNA]</scope>
    <source>
        <strain>HS</strain>
    </source>
</reference>
<proteinExistence type="inferred from homology"/>
<gene>
    <name evidence="1" type="primary">grpE</name>
    <name type="ordered locus">EcHS_A2772</name>
</gene>
<accession>A8A3C0</accession>
<evidence type="ECO:0000255" key="1">
    <source>
        <dbReference type="HAMAP-Rule" id="MF_01151"/>
    </source>
</evidence>
<evidence type="ECO:0000256" key="2">
    <source>
        <dbReference type="SAM" id="MobiDB-lite"/>
    </source>
</evidence>
<dbReference type="EMBL" id="CP000802">
    <property type="protein sequence ID" value="ABV07024.1"/>
    <property type="molecule type" value="Genomic_DNA"/>
</dbReference>
<dbReference type="RefSeq" id="WP_001296310.1">
    <property type="nucleotide sequence ID" value="NC_009800.1"/>
</dbReference>
<dbReference type="SMR" id="A8A3C0"/>
<dbReference type="GeneID" id="93774463"/>
<dbReference type="KEGG" id="ecx:EcHS_A2772"/>
<dbReference type="HOGENOM" id="CLU_057217_6_0_6"/>
<dbReference type="GO" id="GO:0005829">
    <property type="term" value="C:cytosol"/>
    <property type="evidence" value="ECO:0007669"/>
    <property type="project" value="TreeGrafter"/>
</dbReference>
<dbReference type="GO" id="GO:0000774">
    <property type="term" value="F:adenyl-nucleotide exchange factor activity"/>
    <property type="evidence" value="ECO:0007669"/>
    <property type="project" value="InterPro"/>
</dbReference>
<dbReference type="GO" id="GO:0042803">
    <property type="term" value="F:protein homodimerization activity"/>
    <property type="evidence" value="ECO:0007669"/>
    <property type="project" value="InterPro"/>
</dbReference>
<dbReference type="GO" id="GO:0051087">
    <property type="term" value="F:protein-folding chaperone binding"/>
    <property type="evidence" value="ECO:0007669"/>
    <property type="project" value="InterPro"/>
</dbReference>
<dbReference type="GO" id="GO:0051082">
    <property type="term" value="F:unfolded protein binding"/>
    <property type="evidence" value="ECO:0007669"/>
    <property type="project" value="TreeGrafter"/>
</dbReference>
<dbReference type="GO" id="GO:0006457">
    <property type="term" value="P:protein folding"/>
    <property type="evidence" value="ECO:0007669"/>
    <property type="project" value="InterPro"/>
</dbReference>
<dbReference type="CDD" id="cd00446">
    <property type="entry name" value="GrpE"/>
    <property type="match status" value="1"/>
</dbReference>
<dbReference type="FunFam" id="2.30.22.10:FF:000001">
    <property type="entry name" value="Protein GrpE"/>
    <property type="match status" value="1"/>
</dbReference>
<dbReference type="FunFam" id="3.90.20.20:FF:000001">
    <property type="entry name" value="Protein GrpE"/>
    <property type="match status" value="1"/>
</dbReference>
<dbReference type="Gene3D" id="3.90.20.20">
    <property type="match status" value="1"/>
</dbReference>
<dbReference type="Gene3D" id="2.30.22.10">
    <property type="entry name" value="Head domain of nucleotide exchange factor GrpE"/>
    <property type="match status" value="1"/>
</dbReference>
<dbReference type="HAMAP" id="MF_01151">
    <property type="entry name" value="GrpE"/>
    <property type="match status" value="1"/>
</dbReference>
<dbReference type="InterPro" id="IPR000740">
    <property type="entry name" value="GrpE"/>
</dbReference>
<dbReference type="InterPro" id="IPR013805">
    <property type="entry name" value="GrpE_coiled_coil"/>
</dbReference>
<dbReference type="InterPro" id="IPR009012">
    <property type="entry name" value="GrpE_head"/>
</dbReference>
<dbReference type="NCBIfam" id="NF007655">
    <property type="entry name" value="PRK10325.1"/>
    <property type="match status" value="1"/>
</dbReference>
<dbReference type="NCBIfam" id="NF010738">
    <property type="entry name" value="PRK14140.1"/>
    <property type="match status" value="1"/>
</dbReference>
<dbReference type="NCBIfam" id="NF010748">
    <property type="entry name" value="PRK14150.1"/>
    <property type="match status" value="1"/>
</dbReference>
<dbReference type="PANTHER" id="PTHR21237">
    <property type="entry name" value="GRPE PROTEIN"/>
    <property type="match status" value="1"/>
</dbReference>
<dbReference type="PANTHER" id="PTHR21237:SF23">
    <property type="entry name" value="GRPE PROTEIN HOMOLOG, MITOCHONDRIAL"/>
    <property type="match status" value="1"/>
</dbReference>
<dbReference type="Pfam" id="PF01025">
    <property type="entry name" value="GrpE"/>
    <property type="match status" value="1"/>
</dbReference>
<dbReference type="PRINTS" id="PR00773">
    <property type="entry name" value="GRPEPROTEIN"/>
</dbReference>
<dbReference type="SUPFAM" id="SSF58014">
    <property type="entry name" value="Coiled-coil domain of nucleotide exchange factor GrpE"/>
    <property type="match status" value="1"/>
</dbReference>
<dbReference type="SUPFAM" id="SSF51064">
    <property type="entry name" value="Head domain of nucleotide exchange factor GrpE"/>
    <property type="match status" value="1"/>
</dbReference>
<dbReference type="PROSITE" id="PS01071">
    <property type="entry name" value="GRPE"/>
    <property type="match status" value="1"/>
</dbReference>
<comment type="function">
    <text evidence="1">Participates actively in the response to hyperosmotic and heat shock by preventing the aggregation of stress-denatured proteins, in association with DnaK and GrpE. It is the nucleotide exchange factor for DnaK and may function as a thermosensor. Unfolded proteins bind initially to DnaJ; upon interaction with the DnaJ-bound protein, DnaK hydrolyzes its bound ATP, resulting in the formation of a stable complex. GrpE releases ADP from DnaK; ATP binding to DnaK triggers the release of the substrate protein, thus completing the reaction cycle. Several rounds of ATP-dependent interactions between DnaJ, DnaK and GrpE are required for fully efficient folding.</text>
</comment>
<comment type="subunit">
    <text evidence="1">Homodimer.</text>
</comment>
<comment type="subcellular location">
    <subcellularLocation>
        <location evidence="1">Cytoplasm</location>
    </subcellularLocation>
</comment>
<comment type="similarity">
    <text evidence="1">Belongs to the GrpE family.</text>
</comment>
<organism>
    <name type="scientific">Escherichia coli O9:H4 (strain HS)</name>
    <dbReference type="NCBI Taxonomy" id="331112"/>
    <lineage>
        <taxon>Bacteria</taxon>
        <taxon>Pseudomonadati</taxon>
        <taxon>Pseudomonadota</taxon>
        <taxon>Gammaproteobacteria</taxon>
        <taxon>Enterobacterales</taxon>
        <taxon>Enterobacteriaceae</taxon>
        <taxon>Escherichia</taxon>
    </lineage>
</organism>
<keyword id="KW-0143">Chaperone</keyword>
<keyword id="KW-0963">Cytoplasm</keyword>
<keyword id="KW-0346">Stress response</keyword>
<sequence length="197" mass="21812">MSSKEQKTPEGQAPEEIIMDQHEEIEAVEPEASAEQVDPRDEKIANLEAQLAEAQTRERDGILRVKAEMENLRRRTELDIEKAHKFALEKFINELLPVIDSLDRALEVADKANPDMSAMVEGIELTLKSMLDVVRKFGVEVIAETNVPLDPNVHQAIAMVESDDVAPGNVLGIMQKGYTLNGRTIRAAMVTVAKAKA</sequence>
<protein>
    <recommendedName>
        <fullName evidence="1">Protein GrpE</fullName>
    </recommendedName>
    <alternativeName>
        <fullName evidence="1">HSP-70 cofactor</fullName>
    </alternativeName>
</protein>